<sequence length="507" mass="53567">MTQMLHSLLRAVGLPVPEGLANPSLAMVSCDSRSVAQGCLFLGLPGEQVDGGSFWRQALAAGAEAAVIGPAAAALQPPGPTDAVVVVPEPVAAWVGQLAAAFWQQPSSRFALIGVTGTNGKTTTTHLIEHLSVAVGRSTALFGTLVNRWPNYSVPATHTTAFADRLQAQLAQAVEAGAELGVMEVSSHALEQQRVAGCRFAGAVFTNLTQDHLDYHCSMEAYFEAKAQLFAPPLLESGSAKAVVNIDSPWGARLAQRLGDTCWRSSLAEGVLQQADAELKMTELTMSSDGVQGRLISPCGEGWFDSPLMGRFNLMNLLQAVGVLLQQGLPLPLLLKAIADFRGVPGRMERVLIPAADATQVPTVLVDYAHTPDGLENALKASRPFTSKNLCCVFGCGGDRDRGKRSQMAAIAARLADRVVVTSDNPRTEDPQQILADVVAGIPEGTTCTVEVDRAVAIALAIAEAAPGDVVLVAGKGHEDYQILGTSKVHFDDREEAERALKQRLDG</sequence>
<organism>
    <name type="scientific">Prochlorococcus marinus (strain MIT 9313)</name>
    <dbReference type="NCBI Taxonomy" id="74547"/>
    <lineage>
        <taxon>Bacteria</taxon>
        <taxon>Bacillati</taxon>
        <taxon>Cyanobacteriota</taxon>
        <taxon>Cyanophyceae</taxon>
        <taxon>Synechococcales</taxon>
        <taxon>Prochlorococcaceae</taxon>
        <taxon>Prochlorococcus</taxon>
    </lineage>
</organism>
<gene>
    <name evidence="1" type="primary">murE</name>
    <name type="ordered locus">PMT_0230</name>
</gene>
<feature type="chain" id="PRO_0000101924" description="UDP-N-acetylmuramoyl-L-alanyl-D-glutamate--2,6-diaminopimelate ligase">
    <location>
        <begin position="1"/>
        <end position="507"/>
    </location>
</feature>
<feature type="short sequence motif" description="Meso-diaminopimelate recognition motif">
    <location>
        <begin position="424"/>
        <end position="427"/>
    </location>
</feature>
<feature type="binding site" evidence="1">
    <location>
        <position position="32"/>
    </location>
    <ligand>
        <name>UDP-N-acetyl-alpha-D-muramoyl-L-alanyl-D-glutamate</name>
        <dbReference type="ChEBI" id="CHEBI:83900"/>
    </ligand>
</feature>
<feature type="binding site" evidence="1">
    <location>
        <begin position="117"/>
        <end position="123"/>
    </location>
    <ligand>
        <name>ATP</name>
        <dbReference type="ChEBI" id="CHEBI:30616"/>
    </ligand>
</feature>
<feature type="binding site" evidence="1">
    <location>
        <begin position="159"/>
        <end position="160"/>
    </location>
    <ligand>
        <name>UDP-N-acetyl-alpha-D-muramoyl-L-alanyl-D-glutamate</name>
        <dbReference type="ChEBI" id="CHEBI:83900"/>
    </ligand>
</feature>
<feature type="binding site" evidence="1">
    <location>
        <position position="186"/>
    </location>
    <ligand>
        <name>UDP-N-acetyl-alpha-D-muramoyl-L-alanyl-D-glutamate</name>
        <dbReference type="ChEBI" id="CHEBI:83900"/>
    </ligand>
</feature>
<feature type="binding site" evidence="1">
    <location>
        <position position="192"/>
    </location>
    <ligand>
        <name>UDP-N-acetyl-alpha-D-muramoyl-L-alanyl-D-glutamate</name>
        <dbReference type="ChEBI" id="CHEBI:83900"/>
    </ligand>
</feature>
<feature type="binding site" evidence="1">
    <location>
        <position position="194"/>
    </location>
    <ligand>
        <name>UDP-N-acetyl-alpha-D-muramoyl-L-alanyl-D-glutamate</name>
        <dbReference type="ChEBI" id="CHEBI:83900"/>
    </ligand>
</feature>
<feature type="binding site" evidence="1">
    <location>
        <position position="400"/>
    </location>
    <ligand>
        <name>meso-2,6-diaminopimelate</name>
        <dbReference type="ChEBI" id="CHEBI:57791"/>
    </ligand>
</feature>
<feature type="binding site" evidence="1">
    <location>
        <begin position="424"/>
        <end position="427"/>
    </location>
    <ligand>
        <name>meso-2,6-diaminopimelate</name>
        <dbReference type="ChEBI" id="CHEBI:57791"/>
    </ligand>
</feature>
<feature type="binding site" evidence="1">
    <location>
        <position position="475"/>
    </location>
    <ligand>
        <name>meso-2,6-diaminopimelate</name>
        <dbReference type="ChEBI" id="CHEBI:57791"/>
    </ligand>
</feature>
<feature type="binding site" evidence="1">
    <location>
        <position position="479"/>
    </location>
    <ligand>
        <name>meso-2,6-diaminopimelate</name>
        <dbReference type="ChEBI" id="CHEBI:57791"/>
    </ligand>
</feature>
<feature type="modified residue" description="N6-carboxylysine" evidence="1">
    <location>
        <position position="226"/>
    </location>
</feature>
<dbReference type="EC" id="6.3.2.13" evidence="1"/>
<dbReference type="EMBL" id="BX548175">
    <property type="protein sequence ID" value="CAE20405.1"/>
    <property type="molecule type" value="Genomic_DNA"/>
</dbReference>
<dbReference type="RefSeq" id="WP_011129609.1">
    <property type="nucleotide sequence ID" value="NC_005071.1"/>
</dbReference>
<dbReference type="SMR" id="Q7V8U6"/>
<dbReference type="KEGG" id="pmt:PMT_0230"/>
<dbReference type="eggNOG" id="COG0769">
    <property type="taxonomic scope" value="Bacteria"/>
</dbReference>
<dbReference type="HOGENOM" id="CLU_022291_4_1_3"/>
<dbReference type="OrthoDB" id="9800958at2"/>
<dbReference type="UniPathway" id="UPA00219"/>
<dbReference type="Proteomes" id="UP000001423">
    <property type="component" value="Chromosome"/>
</dbReference>
<dbReference type="GO" id="GO:0005737">
    <property type="term" value="C:cytoplasm"/>
    <property type="evidence" value="ECO:0007669"/>
    <property type="project" value="UniProtKB-SubCell"/>
</dbReference>
<dbReference type="GO" id="GO:0005524">
    <property type="term" value="F:ATP binding"/>
    <property type="evidence" value="ECO:0007669"/>
    <property type="project" value="UniProtKB-UniRule"/>
</dbReference>
<dbReference type="GO" id="GO:0000287">
    <property type="term" value="F:magnesium ion binding"/>
    <property type="evidence" value="ECO:0007669"/>
    <property type="project" value="UniProtKB-UniRule"/>
</dbReference>
<dbReference type="GO" id="GO:0008765">
    <property type="term" value="F:UDP-N-acetylmuramoylalanyl-D-glutamate-2,6-diaminopimelate ligase activity"/>
    <property type="evidence" value="ECO:0007669"/>
    <property type="project" value="UniProtKB-UniRule"/>
</dbReference>
<dbReference type="GO" id="GO:0051301">
    <property type="term" value="P:cell division"/>
    <property type="evidence" value="ECO:0007669"/>
    <property type="project" value="UniProtKB-KW"/>
</dbReference>
<dbReference type="GO" id="GO:0071555">
    <property type="term" value="P:cell wall organization"/>
    <property type="evidence" value="ECO:0007669"/>
    <property type="project" value="UniProtKB-KW"/>
</dbReference>
<dbReference type="GO" id="GO:0009252">
    <property type="term" value="P:peptidoglycan biosynthetic process"/>
    <property type="evidence" value="ECO:0007669"/>
    <property type="project" value="UniProtKB-UniRule"/>
</dbReference>
<dbReference type="GO" id="GO:0008360">
    <property type="term" value="P:regulation of cell shape"/>
    <property type="evidence" value="ECO:0007669"/>
    <property type="project" value="UniProtKB-KW"/>
</dbReference>
<dbReference type="FunFam" id="3.90.190.20:FF:000006">
    <property type="entry name" value="UDP-N-acetylmuramoyl-L-alanyl-D-glutamate--2,6-diaminopimelate ligase"/>
    <property type="match status" value="1"/>
</dbReference>
<dbReference type="Gene3D" id="3.90.190.20">
    <property type="entry name" value="Mur ligase, C-terminal domain"/>
    <property type="match status" value="1"/>
</dbReference>
<dbReference type="Gene3D" id="3.40.1190.10">
    <property type="entry name" value="Mur-like, catalytic domain"/>
    <property type="match status" value="1"/>
</dbReference>
<dbReference type="Gene3D" id="3.40.1390.10">
    <property type="entry name" value="MurE/MurF, N-terminal domain"/>
    <property type="match status" value="1"/>
</dbReference>
<dbReference type="HAMAP" id="MF_00208">
    <property type="entry name" value="MurE"/>
    <property type="match status" value="1"/>
</dbReference>
<dbReference type="InterPro" id="IPR036565">
    <property type="entry name" value="Mur-like_cat_sf"/>
</dbReference>
<dbReference type="InterPro" id="IPR004101">
    <property type="entry name" value="Mur_ligase_C"/>
</dbReference>
<dbReference type="InterPro" id="IPR036615">
    <property type="entry name" value="Mur_ligase_C_dom_sf"/>
</dbReference>
<dbReference type="InterPro" id="IPR013221">
    <property type="entry name" value="Mur_ligase_cen"/>
</dbReference>
<dbReference type="InterPro" id="IPR000713">
    <property type="entry name" value="Mur_ligase_N"/>
</dbReference>
<dbReference type="InterPro" id="IPR035911">
    <property type="entry name" value="MurE/MurF_N"/>
</dbReference>
<dbReference type="InterPro" id="IPR005761">
    <property type="entry name" value="UDP-N-AcMur-Glu-dNH2Pim_ligase"/>
</dbReference>
<dbReference type="NCBIfam" id="TIGR01085">
    <property type="entry name" value="murE"/>
    <property type="match status" value="1"/>
</dbReference>
<dbReference type="NCBIfam" id="NF001124">
    <property type="entry name" value="PRK00139.1-2"/>
    <property type="match status" value="1"/>
</dbReference>
<dbReference type="NCBIfam" id="NF001126">
    <property type="entry name" value="PRK00139.1-4"/>
    <property type="match status" value="1"/>
</dbReference>
<dbReference type="PANTHER" id="PTHR23135">
    <property type="entry name" value="MUR LIGASE FAMILY MEMBER"/>
    <property type="match status" value="1"/>
</dbReference>
<dbReference type="PANTHER" id="PTHR23135:SF4">
    <property type="entry name" value="UDP-N-ACETYLMURAMOYL-L-ALANYL-D-GLUTAMATE--2,6-DIAMINOPIMELATE LIGASE MURE HOMOLOG, CHLOROPLASTIC"/>
    <property type="match status" value="1"/>
</dbReference>
<dbReference type="Pfam" id="PF01225">
    <property type="entry name" value="Mur_ligase"/>
    <property type="match status" value="1"/>
</dbReference>
<dbReference type="Pfam" id="PF02875">
    <property type="entry name" value="Mur_ligase_C"/>
    <property type="match status" value="1"/>
</dbReference>
<dbReference type="Pfam" id="PF08245">
    <property type="entry name" value="Mur_ligase_M"/>
    <property type="match status" value="1"/>
</dbReference>
<dbReference type="SUPFAM" id="SSF53623">
    <property type="entry name" value="MurD-like peptide ligases, catalytic domain"/>
    <property type="match status" value="1"/>
</dbReference>
<dbReference type="SUPFAM" id="SSF53244">
    <property type="entry name" value="MurD-like peptide ligases, peptide-binding domain"/>
    <property type="match status" value="1"/>
</dbReference>
<dbReference type="SUPFAM" id="SSF63418">
    <property type="entry name" value="MurE/MurF N-terminal domain"/>
    <property type="match status" value="1"/>
</dbReference>
<evidence type="ECO:0000255" key="1">
    <source>
        <dbReference type="HAMAP-Rule" id="MF_00208"/>
    </source>
</evidence>
<proteinExistence type="inferred from homology"/>
<keyword id="KW-0067">ATP-binding</keyword>
<keyword id="KW-0131">Cell cycle</keyword>
<keyword id="KW-0132">Cell division</keyword>
<keyword id="KW-0133">Cell shape</keyword>
<keyword id="KW-0961">Cell wall biogenesis/degradation</keyword>
<keyword id="KW-0963">Cytoplasm</keyword>
<keyword id="KW-0436">Ligase</keyword>
<keyword id="KW-0460">Magnesium</keyword>
<keyword id="KW-0547">Nucleotide-binding</keyword>
<keyword id="KW-0573">Peptidoglycan synthesis</keyword>
<keyword id="KW-1185">Reference proteome</keyword>
<reference key="1">
    <citation type="journal article" date="2003" name="Nature">
        <title>Genome divergence in two Prochlorococcus ecotypes reflects oceanic niche differentiation.</title>
        <authorList>
            <person name="Rocap G."/>
            <person name="Larimer F.W."/>
            <person name="Lamerdin J.E."/>
            <person name="Malfatti S."/>
            <person name="Chain P."/>
            <person name="Ahlgren N.A."/>
            <person name="Arellano A."/>
            <person name="Coleman M."/>
            <person name="Hauser L."/>
            <person name="Hess W.R."/>
            <person name="Johnson Z.I."/>
            <person name="Land M.L."/>
            <person name="Lindell D."/>
            <person name="Post A.F."/>
            <person name="Regala W."/>
            <person name="Shah M."/>
            <person name="Shaw S.L."/>
            <person name="Steglich C."/>
            <person name="Sullivan M.B."/>
            <person name="Ting C.S."/>
            <person name="Tolonen A."/>
            <person name="Webb E.A."/>
            <person name="Zinser E.R."/>
            <person name="Chisholm S.W."/>
        </authorList>
    </citation>
    <scope>NUCLEOTIDE SEQUENCE [LARGE SCALE GENOMIC DNA]</scope>
    <source>
        <strain>MIT 9313</strain>
    </source>
</reference>
<name>MURE_PROMM</name>
<accession>Q7V8U6</accession>
<protein>
    <recommendedName>
        <fullName evidence="1">UDP-N-acetylmuramoyl-L-alanyl-D-glutamate--2,6-diaminopimelate ligase</fullName>
        <ecNumber evidence="1">6.3.2.13</ecNumber>
    </recommendedName>
    <alternativeName>
        <fullName evidence="1">Meso-A2pm-adding enzyme</fullName>
    </alternativeName>
    <alternativeName>
        <fullName evidence="1">Meso-diaminopimelate-adding enzyme</fullName>
    </alternativeName>
    <alternativeName>
        <fullName evidence="1">UDP-MurNAc-L-Ala-D-Glu:meso-diaminopimelate ligase</fullName>
    </alternativeName>
    <alternativeName>
        <fullName evidence="1">UDP-MurNAc-tripeptide synthetase</fullName>
    </alternativeName>
    <alternativeName>
        <fullName evidence="1">UDP-N-acetylmuramyl-tripeptide synthetase</fullName>
    </alternativeName>
</protein>
<comment type="function">
    <text evidence="1">Catalyzes the addition of meso-diaminopimelic acid to the nucleotide precursor UDP-N-acetylmuramoyl-L-alanyl-D-glutamate (UMAG) in the biosynthesis of bacterial cell-wall peptidoglycan.</text>
</comment>
<comment type="catalytic activity">
    <reaction evidence="1">
        <text>UDP-N-acetyl-alpha-D-muramoyl-L-alanyl-D-glutamate + meso-2,6-diaminopimelate + ATP = UDP-N-acetyl-alpha-D-muramoyl-L-alanyl-gamma-D-glutamyl-meso-2,6-diaminopimelate + ADP + phosphate + H(+)</text>
        <dbReference type="Rhea" id="RHEA:23676"/>
        <dbReference type="ChEBI" id="CHEBI:15378"/>
        <dbReference type="ChEBI" id="CHEBI:30616"/>
        <dbReference type="ChEBI" id="CHEBI:43474"/>
        <dbReference type="ChEBI" id="CHEBI:57791"/>
        <dbReference type="ChEBI" id="CHEBI:83900"/>
        <dbReference type="ChEBI" id="CHEBI:83905"/>
        <dbReference type="ChEBI" id="CHEBI:456216"/>
        <dbReference type="EC" id="6.3.2.13"/>
    </reaction>
</comment>
<comment type="cofactor">
    <cofactor evidence="1">
        <name>Mg(2+)</name>
        <dbReference type="ChEBI" id="CHEBI:18420"/>
    </cofactor>
</comment>
<comment type="pathway">
    <text evidence="1">Cell wall biogenesis; peptidoglycan biosynthesis.</text>
</comment>
<comment type="subcellular location">
    <subcellularLocation>
        <location evidence="1">Cytoplasm</location>
    </subcellularLocation>
</comment>
<comment type="PTM">
    <text evidence="1">Carboxylation is probably crucial for Mg(2+) binding and, consequently, for the gamma-phosphate positioning of ATP.</text>
</comment>
<comment type="similarity">
    <text evidence="1">Belongs to the MurCDEF family. MurE subfamily.</text>
</comment>